<reference key="1">
    <citation type="journal article" date="1999" name="Nature">
        <title>The Toll-like receptor 2 is recruited to macrophage phagosomes and discriminates between pathogens.</title>
        <authorList>
            <person name="Underhill D.M."/>
            <person name="Ozinsky A."/>
            <person name="Hajjar A.M."/>
            <person name="Stevens A."/>
            <person name="Wilson C.B."/>
            <person name="Bassetti M."/>
            <person name="Aderem A."/>
        </authorList>
    </citation>
    <scope>NUCLEOTIDE SEQUENCE [MRNA]</scope>
    <scope>MUTAGENESIS OF PRO-681</scope>
</reference>
<reference key="2">
    <citation type="journal article" date="1999" name="J. Immunol.">
        <title>Cells that carry a null allele for Toll-like receptor 2 are capable of responding to endotoxin.</title>
        <authorList>
            <person name="Heine H."/>
            <person name="Kirschning C.J."/>
            <person name="Lien E."/>
            <person name="Monks B.G."/>
            <person name="Rothe M."/>
            <person name="Golenbock D.T."/>
        </authorList>
    </citation>
    <scope>NUCLEOTIDE SEQUENCE [MRNA]</scope>
    <source>
        <tissue>Macrophage</tissue>
    </source>
</reference>
<reference key="3">
    <citation type="journal article" date="2000" name="Blood">
        <title>Gene expressions of lipopolysaccharide receptors, Toll-like receptors 2 and 4, are differently regulated in mouse T lymphocytes.</title>
        <authorList>
            <person name="Matsuguchi T."/>
            <person name="Takagi K."/>
            <person name="Musikacharoen T."/>
            <person name="Yoshikai Y."/>
        </authorList>
    </citation>
    <scope>NUCLEOTIDE SEQUENCE [MRNA]</scope>
    <source>
        <tissue>Macrophage</tissue>
    </source>
</reference>
<reference key="4">
    <citation type="journal article" date="2000" name="J. Biol. Chem.">
        <title>The lipopolysaccharide-activated Toll-like receptor (TLR)-4 induces synthesis of the closely related receptor TLR-2 in adipocytes.</title>
        <authorList>
            <person name="Lin Y."/>
            <person name="Lee H."/>
            <person name="Berg A.H."/>
            <person name="Lisanti M.P."/>
            <person name="Shapiro L."/>
            <person name="Scherer P.E."/>
        </authorList>
    </citation>
    <scope>NUCLEOTIDE SEQUENCE [MRNA]</scope>
    <source>
        <tissue>Adipocyte</tissue>
    </source>
</reference>
<reference key="5">
    <citation type="journal article" date="2005" name="Science">
        <title>The transcriptional landscape of the mammalian genome.</title>
        <authorList>
            <person name="Carninci P."/>
            <person name="Kasukawa T."/>
            <person name="Katayama S."/>
            <person name="Gough J."/>
            <person name="Frith M.C."/>
            <person name="Maeda N."/>
            <person name="Oyama R."/>
            <person name="Ravasi T."/>
            <person name="Lenhard B."/>
            <person name="Wells C."/>
            <person name="Kodzius R."/>
            <person name="Shimokawa K."/>
            <person name="Bajic V.B."/>
            <person name="Brenner S.E."/>
            <person name="Batalov S."/>
            <person name="Forrest A.R."/>
            <person name="Zavolan M."/>
            <person name="Davis M.J."/>
            <person name="Wilming L.G."/>
            <person name="Aidinis V."/>
            <person name="Allen J.E."/>
            <person name="Ambesi-Impiombato A."/>
            <person name="Apweiler R."/>
            <person name="Aturaliya R.N."/>
            <person name="Bailey T.L."/>
            <person name="Bansal M."/>
            <person name="Baxter L."/>
            <person name="Beisel K.W."/>
            <person name="Bersano T."/>
            <person name="Bono H."/>
            <person name="Chalk A.M."/>
            <person name="Chiu K.P."/>
            <person name="Choudhary V."/>
            <person name="Christoffels A."/>
            <person name="Clutterbuck D.R."/>
            <person name="Crowe M.L."/>
            <person name="Dalla E."/>
            <person name="Dalrymple B.P."/>
            <person name="de Bono B."/>
            <person name="Della Gatta G."/>
            <person name="di Bernardo D."/>
            <person name="Down T."/>
            <person name="Engstrom P."/>
            <person name="Fagiolini M."/>
            <person name="Faulkner G."/>
            <person name="Fletcher C.F."/>
            <person name="Fukushima T."/>
            <person name="Furuno M."/>
            <person name="Futaki S."/>
            <person name="Gariboldi M."/>
            <person name="Georgii-Hemming P."/>
            <person name="Gingeras T.R."/>
            <person name="Gojobori T."/>
            <person name="Green R.E."/>
            <person name="Gustincich S."/>
            <person name="Harbers M."/>
            <person name="Hayashi Y."/>
            <person name="Hensch T.K."/>
            <person name="Hirokawa N."/>
            <person name="Hill D."/>
            <person name="Huminiecki L."/>
            <person name="Iacono M."/>
            <person name="Ikeo K."/>
            <person name="Iwama A."/>
            <person name="Ishikawa T."/>
            <person name="Jakt M."/>
            <person name="Kanapin A."/>
            <person name="Katoh M."/>
            <person name="Kawasawa Y."/>
            <person name="Kelso J."/>
            <person name="Kitamura H."/>
            <person name="Kitano H."/>
            <person name="Kollias G."/>
            <person name="Krishnan S.P."/>
            <person name="Kruger A."/>
            <person name="Kummerfeld S.K."/>
            <person name="Kurochkin I.V."/>
            <person name="Lareau L.F."/>
            <person name="Lazarevic D."/>
            <person name="Lipovich L."/>
            <person name="Liu J."/>
            <person name="Liuni S."/>
            <person name="McWilliam S."/>
            <person name="Madan Babu M."/>
            <person name="Madera M."/>
            <person name="Marchionni L."/>
            <person name="Matsuda H."/>
            <person name="Matsuzawa S."/>
            <person name="Miki H."/>
            <person name="Mignone F."/>
            <person name="Miyake S."/>
            <person name="Morris K."/>
            <person name="Mottagui-Tabar S."/>
            <person name="Mulder N."/>
            <person name="Nakano N."/>
            <person name="Nakauchi H."/>
            <person name="Ng P."/>
            <person name="Nilsson R."/>
            <person name="Nishiguchi S."/>
            <person name="Nishikawa S."/>
            <person name="Nori F."/>
            <person name="Ohara O."/>
            <person name="Okazaki Y."/>
            <person name="Orlando V."/>
            <person name="Pang K.C."/>
            <person name="Pavan W.J."/>
            <person name="Pavesi G."/>
            <person name="Pesole G."/>
            <person name="Petrovsky N."/>
            <person name="Piazza S."/>
            <person name="Reed J."/>
            <person name="Reid J.F."/>
            <person name="Ring B.Z."/>
            <person name="Ringwald M."/>
            <person name="Rost B."/>
            <person name="Ruan Y."/>
            <person name="Salzberg S.L."/>
            <person name="Sandelin A."/>
            <person name="Schneider C."/>
            <person name="Schoenbach C."/>
            <person name="Sekiguchi K."/>
            <person name="Semple C.A."/>
            <person name="Seno S."/>
            <person name="Sessa L."/>
            <person name="Sheng Y."/>
            <person name="Shibata Y."/>
            <person name="Shimada H."/>
            <person name="Shimada K."/>
            <person name="Silva D."/>
            <person name="Sinclair B."/>
            <person name="Sperling S."/>
            <person name="Stupka E."/>
            <person name="Sugiura K."/>
            <person name="Sultana R."/>
            <person name="Takenaka Y."/>
            <person name="Taki K."/>
            <person name="Tammoja K."/>
            <person name="Tan S.L."/>
            <person name="Tang S."/>
            <person name="Taylor M.S."/>
            <person name="Tegner J."/>
            <person name="Teichmann S.A."/>
            <person name="Ueda H.R."/>
            <person name="van Nimwegen E."/>
            <person name="Verardo R."/>
            <person name="Wei C.L."/>
            <person name="Yagi K."/>
            <person name="Yamanishi H."/>
            <person name="Zabarovsky E."/>
            <person name="Zhu S."/>
            <person name="Zimmer A."/>
            <person name="Hide W."/>
            <person name="Bult C."/>
            <person name="Grimmond S.M."/>
            <person name="Teasdale R.D."/>
            <person name="Liu E.T."/>
            <person name="Brusic V."/>
            <person name="Quackenbush J."/>
            <person name="Wahlestedt C."/>
            <person name="Mattick J.S."/>
            <person name="Hume D.A."/>
            <person name="Kai C."/>
            <person name="Sasaki D."/>
            <person name="Tomaru Y."/>
            <person name="Fukuda S."/>
            <person name="Kanamori-Katayama M."/>
            <person name="Suzuki M."/>
            <person name="Aoki J."/>
            <person name="Arakawa T."/>
            <person name="Iida J."/>
            <person name="Imamura K."/>
            <person name="Itoh M."/>
            <person name="Kato T."/>
            <person name="Kawaji H."/>
            <person name="Kawagashira N."/>
            <person name="Kawashima T."/>
            <person name="Kojima M."/>
            <person name="Kondo S."/>
            <person name="Konno H."/>
            <person name="Nakano K."/>
            <person name="Ninomiya N."/>
            <person name="Nishio T."/>
            <person name="Okada M."/>
            <person name="Plessy C."/>
            <person name="Shibata K."/>
            <person name="Shiraki T."/>
            <person name="Suzuki S."/>
            <person name="Tagami M."/>
            <person name="Waki K."/>
            <person name="Watahiki A."/>
            <person name="Okamura-Oho Y."/>
            <person name="Suzuki H."/>
            <person name="Kawai J."/>
            <person name="Hayashizaki Y."/>
        </authorList>
    </citation>
    <scope>NUCLEOTIDE SEQUENCE [LARGE SCALE MRNA]</scope>
    <source>
        <strain>C57BL/6J</strain>
        <strain>NOD</strain>
        <tissue>Liver</tissue>
    </source>
</reference>
<reference key="6">
    <citation type="submission" date="2007-04" db="UniProtKB">
        <authorList>
            <person name="Lubec G."/>
            <person name="Kang S.U."/>
        </authorList>
    </citation>
    <scope>PROTEIN SEQUENCE OF 405-413 AND 754-759</scope>
    <scope>IDENTIFICATION BY MASS SPECTROMETRY</scope>
    <source>
        <strain>C57BL/6J</strain>
        <tissue>Brain</tissue>
    </source>
</reference>
<reference key="7">
    <citation type="journal article" date="2000" name="Proc. Natl. Acad. Sci. U.S.A.">
        <title>The repertoire for pattern recognition of pathogens by the innate immune system is defined by cooperation between Toll-like receptors.</title>
        <authorList>
            <person name="Ozinsky A."/>
            <person name="Underhill D.M."/>
            <person name="Fontenot J.D."/>
            <person name="Hajjar A.M."/>
            <person name="Smith K.D."/>
            <person name="Wilson C.B."/>
            <person name="Schroeder L."/>
            <person name="Aderem A."/>
        </authorList>
    </citation>
    <scope>SUBCELLULAR LOCATION</scope>
    <source>
        <strain>BALB/cJ</strain>
        <tissue>Macrophage</tissue>
    </source>
</reference>
<reference key="8">
    <citation type="journal article" date="2005" name="Nature">
        <title>CD36 is a sensor of diacylglycerides.</title>
        <authorList>
            <person name="Hoebe K."/>
            <person name="Georgel P."/>
            <person name="Rutschmann S."/>
            <person name="Du X."/>
            <person name="Mudd S."/>
            <person name="Crozat K."/>
            <person name="Sovath S."/>
            <person name="Shamel L."/>
            <person name="Hartung T."/>
            <person name="Zaehringer U."/>
            <person name="Beutler B."/>
        </authorList>
    </citation>
    <scope>FUNCTION</scope>
    <scope>DISRUPTION PHENOTYPE</scope>
</reference>
<reference key="9">
    <citation type="journal article" date="2007" name="Nat. Immunol.">
        <title>Direct extracellular interaction between the early secreted antigen ESAT-6 of Mycobacterium tuberculosis and TLR2 inhibits TLR signaling in macrophages.</title>
        <authorList>
            <person name="Pathak S.K."/>
            <person name="Basu S."/>
            <person name="Basu K.K."/>
            <person name="Banerjee A."/>
            <person name="Pathak S."/>
            <person name="Bhattacharyya A."/>
            <person name="Kaisho T."/>
            <person name="Kundu M."/>
            <person name="Basu J."/>
        </authorList>
    </citation>
    <scope>FUNCTION</scope>
    <scope>INTERACTION WITH M.TUBERCULOSIS ESXA</scope>
</reference>
<reference key="10">
    <citation type="journal article" date="2015" name="Nat. Immunol.">
        <title>Corrigendum: Direct extracellular interaction between the early secreted antigen ESAT-6 of Mycobacterium tuberculosis and TLR2 inhibits TLR signaling in macrophages.</title>
        <authorList>
            <person name="Pathak S.K."/>
            <person name="Basu S."/>
            <person name="Basu K.K."/>
            <person name="Banerjee A."/>
            <person name="Pathak S."/>
            <person name="Bhattacharyya A."/>
            <person name="Kaisho T."/>
            <person name="Kundu M."/>
            <person name="Basu J."/>
        </authorList>
    </citation>
    <scope>ERRATUM OF PUBMED:17486091</scope>
</reference>
<reference key="11">
    <citation type="journal article" date="2008" name="Int. Immunol.">
        <title>A single base mutation in the PRAT4A gene reveals differential interaction of PRAT4A with Toll-like receptors.</title>
        <authorList>
            <person name="Kiyokawa T."/>
            <person name="Akashi-Takamura S."/>
            <person name="Shibata T."/>
            <person name="Matsumoto F."/>
            <person name="Nishitani C."/>
            <person name="Kuroki Y."/>
            <person name="Seto Y."/>
            <person name="Miyake K."/>
        </authorList>
    </citation>
    <scope>INTERACTION WITH CNPY3</scope>
</reference>
<reference key="12">
    <citation type="journal article" date="2009" name="Cell. Immunol.">
        <title>TLR2 and its co-receptors determine responses of macrophages and dendritic cells to lipoproteins of Mycobacterium tuberculosis.</title>
        <authorList>
            <person name="Drage M.G."/>
            <person name="Pecora N.D."/>
            <person name="Hise A.G."/>
            <person name="Febbraio M."/>
            <person name="Silverstein R.L."/>
            <person name="Golenbock D.T."/>
            <person name="Boom W.H."/>
            <person name="Harding C.V."/>
        </authorList>
    </citation>
    <scope>FUNCTION</scope>
    <scope>TISSUE SPECIFICITY</scope>
    <source>
        <tissue>Macrophage</tissue>
    </source>
</reference>
<reference key="13">
    <citation type="journal article" date="2012" name="Infect. Immun.">
        <title>Staphylococcal superantigen-like protein 3 binds to the Toll-like receptor 2 extracellular domain and inhibits cytokine production induced by Staphylococcus aureus, cell wall component, or lipopeptides in murine macrophages.</title>
        <authorList>
            <person name="Yokoyama R."/>
            <person name="Itoh S."/>
            <person name="Kamoshida G."/>
            <person name="Takii T."/>
            <person name="Fujii S."/>
            <person name="Tsuji T."/>
            <person name="Onozaki K."/>
        </authorList>
    </citation>
    <scope>INTERACTION WITH STAPHYLOCOCCUS AUREUS SUPERANTIGEN-LIKE PROTEIN 3 (MICROBIAL INFECTION)</scope>
</reference>
<reference key="14">
    <citation type="journal article" date="2012" name="J. Immunol.">
        <title>Recombinant MPT83 derived from Mycobacterium tuberculosis induces cytokine production and upregulates the function of mouse macrophages through TLR2.</title>
        <authorList>
            <person name="Chen S.T."/>
            <person name="Li J.Y."/>
            <person name="Zhang Y."/>
            <person name="Gao X."/>
            <person name="Cai H."/>
        </authorList>
    </citation>
    <scope>FUNCTION</scope>
    <scope>INTERACTION WITH M.TUBERCULOSIS MPT83 (MICROBIAL INFECTION)</scope>
    <source>
        <tissue>Macrophage</tissue>
    </source>
</reference>
<reference key="15">
    <citation type="journal article" date="2016" name="Cell. Microbiol.">
        <title>LppM impact on the colonization of macrophages by Mycobacterium tuberculosis.</title>
        <authorList>
            <person name="Deboosere N."/>
            <person name="Iantomasi R."/>
            <person name="Queval C.J."/>
            <person name="Song O.R."/>
            <person name="Deloison G."/>
            <person name="Jouny S."/>
            <person name="Debrie A.S."/>
            <person name="Chamaillard M."/>
            <person name="Nigou J."/>
            <person name="Cohen-Gonsaud M."/>
            <person name="Locht C."/>
            <person name="Brodin P."/>
            <person name="Veyron-Churlet R."/>
        </authorList>
    </citation>
    <scope>FUNCTION</scope>
    <source>
        <tissue>Macrophage</tissue>
    </source>
</reference>
<reference key="16">
    <citation type="journal article" date="2016" name="Elife">
        <title>RING finger E3 ligase PPP1R11 regulates TLR2 signaling and innate immunity.</title>
        <authorList>
            <person name="McKelvey A.C."/>
            <person name="Lear T.B."/>
            <person name="Dunn S.R."/>
            <person name="Evankovich J."/>
            <person name="Londino J.D."/>
            <person name="Bednash J.S."/>
            <person name="Zhang Y."/>
            <person name="McVerry B.J."/>
            <person name="Liu Y."/>
            <person name="Chen B.B."/>
        </authorList>
    </citation>
    <scope>UBIQUITINATION AT LYS-754</scope>
    <scope>DEUBIQUITINATION</scope>
    <scope>INTERACTION WITH PPP1R11</scope>
</reference>
<reference key="17">
    <citation type="journal article" date="2019" name="PLoS Pathog.">
        <title>The lectin-specific activity of Toxoplasma gondii microneme proteins 1 and 4 binds Toll-like receptor 2 and 4 N-glycans to regulate innate immune priming.</title>
        <authorList>
            <person name="Sardinha-Silva A."/>
            <person name="Mendonca-Natividade F.C."/>
            <person name="Pinzan C.F."/>
            <person name="Lopes C.D."/>
            <person name="Costa D.L."/>
            <person name="Jacot D."/>
            <person name="Fernandes F.F."/>
            <person name="Zorzetto-Fernandes A.L.V."/>
            <person name="Gay N.J."/>
            <person name="Sher A."/>
            <person name="Jankovic D."/>
            <person name="Soldati-Favre D."/>
            <person name="Grigg M.E."/>
            <person name="Roque-Barreira M.C."/>
        </authorList>
    </citation>
    <scope>FUNCTION (MICROBIAL INFECTION)</scope>
    <scope>INTERACTION WITH TOXOPLASMA GONDII MIC1 AND MIC4</scope>
</reference>
<reference key="18">
    <citation type="journal article" date="2007" name="Cell">
        <title>Crystal structure of the TLR1-TLR2 heterodimer induced by binding of a tri-acylated lipopeptide.</title>
        <authorList>
            <person name="Jin M.S."/>
            <person name="Kim S.E."/>
            <person name="Heo J.Y."/>
            <person name="Lee M.E."/>
            <person name="Kim H.M."/>
            <person name="Paik S.-G."/>
            <person name="Lee H."/>
            <person name="Lee J.-O."/>
        </authorList>
    </citation>
    <scope>X-RAY CRYSTALLOGRAPHY (1.8 ANGSTROMS) OF 27-506</scope>
    <scope>DISULFIDE BONDS</scope>
    <scope>GLYCOSYLATION AT ASN-147; ASN-414 AND ASN-442</scope>
</reference>
<reference key="19">
    <citation type="journal article" date="2009" name="Immunity">
        <title>Recognition of lipopeptide patterns by Toll-like receptor 2-Toll-like receptor 6 heterodimer.</title>
        <authorList>
            <person name="Kang J.Y."/>
            <person name="Nan X."/>
            <person name="Jin M.S."/>
            <person name="Youn S.J."/>
            <person name="Ryu Y.H."/>
            <person name="Mah S."/>
            <person name="Han S.H."/>
            <person name="Lee H."/>
            <person name="Paik S.G."/>
            <person name="Lee J.O."/>
        </authorList>
    </citation>
    <scope>X-RAY CRYSTALLOGRAPHY (2.9 ANGSTROMS) OF 1-506 IN COMPLEX WITH TLR6 AND LIPOPEPTIDE</scope>
    <scope>DISULFIDE BONDS</scope>
    <scope>GLYCOSYLATION AT ASN-147; ASN-414 AND ASN-442</scope>
    <scope>FUNCTION</scope>
    <scope>LRR REPEATS</scope>
    <scope>SUBUNIT</scope>
</reference>
<reference key="20">
    <citation type="journal article" date="2015" name="Proc. Natl. Acad. Sci. U.S.A.">
        <title>Structural basis for inhibition of TLR2 by staphylococcal superantigen-like protein 3 (SSL3).</title>
        <authorList>
            <person name="Koymans K.J."/>
            <person name="Feitsma L.J."/>
            <person name="Brondijk T.H."/>
            <person name="Aerts P.C."/>
            <person name="Lukkien E."/>
            <person name="Loessl P."/>
            <person name="van Kessel K.P."/>
            <person name="de Haas C.J."/>
            <person name="van Strijp J.A."/>
            <person name="Huizinga E.G."/>
        </authorList>
    </citation>
    <scope>X-RAY CRYSTALLOGRAPHY (3.20 ANGSTROMS) OF 25-589</scope>
    <scope>GLYCOSYLATION AT ASN-414 AND ASN-442</scope>
    <scope>INTERACTION WITH STAPHYLOCOCCAL SUPERANTIGEN-LIKE PROTEIN 3</scope>
</reference>
<keyword id="KW-0002">3D-structure</keyword>
<keyword id="KW-1003">Cell membrane</keyword>
<keyword id="KW-0968">Cytoplasmic vesicle</keyword>
<keyword id="KW-0903">Direct protein sequencing</keyword>
<keyword id="KW-1015">Disulfide bond</keyword>
<keyword id="KW-0325">Glycoprotein</keyword>
<keyword id="KW-0391">Immunity</keyword>
<keyword id="KW-0395">Inflammatory response</keyword>
<keyword id="KW-0399">Innate immunity</keyword>
<keyword id="KW-1017">Isopeptide bond</keyword>
<keyword id="KW-0433">Leucine-rich repeat</keyword>
<keyword id="KW-0472">Membrane</keyword>
<keyword id="KW-0520">NAD</keyword>
<keyword id="KW-0675">Receptor</keyword>
<keyword id="KW-1185">Reference proteome</keyword>
<keyword id="KW-0677">Repeat</keyword>
<keyword id="KW-0732">Signal</keyword>
<keyword id="KW-0812">Transmembrane</keyword>
<keyword id="KW-1133">Transmembrane helix</keyword>
<keyword id="KW-0832">Ubl conjugation</keyword>
<name>TLR2_MOUSE</name>
<protein>
    <recommendedName>
        <fullName>Toll-like receptor 2</fullName>
    </recommendedName>
    <cdAntigenName>CD282</cdAntigenName>
</protein>
<proteinExistence type="evidence at protein level"/>
<feature type="signal peptide" evidence="4">
    <location>
        <begin position="1"/>
        <end position="24"/>
    </location>
</feature>
<feature type="chain" id="PRO_0000034712" description="Toll-like receptor 2">
    <location>
        <begin position="25"/>
        <end position="784"/>
    </location>
</feature>
<feature type="topological domain" description="Extracellular" evidence="4">
    <location>
        <begin position="25"/>
        <end position="587"/>
    </location>
</feature>
<feature type="transmembrane region" description="Helical" evidence="4">
    <location>
        <begin position="588"/>
        <end position="608"/>
    </location>
</feature>
<feature type="topological domain" description="Cytoplasmic" evidence="4">
    <location>
        <begin position="609"/>
        <end position="784"/>
    </location>
</feature>
<feature type="repeat" description="LRR 1" evidence="13">
    <location>
        <begin position="54"/>
        <end position="77"/>
    </location>
</feature>
<feature type="repeat" description="LRR 2" evidence="13">
    <location>
        <begin position="78"/>
        <end position="101"/>
    </location>
</feature>
<feature type="repeat" description="LRR 3" evidence="13">
    <location>
        <begin position="102"/>
        <end position="125"/>
    </location>
</feature>
<feature type="repeat" description="LRR 4" evidence="13">
    <location>
        <begin position="126"/>
        <end position="150"/>
    </location>
</feature>
<feature type="repeat" description="LRR 5" evidence="13">
    <location>
        <begin position="151"/>
        <end position="175"/>
    </location>
</feature>
<feature type="repeat" description="LRR 6" evidence="13">
    <location>
        <begin position="176"/>
        <end position="199"/>
    </location>
</feature>
<feature type="repeat" description="LRR 7" evidence="13">
    <location>
        <begin position="200"/>
        <end position="223"/>
    </location>
</feature>
<feature type="repeat" description="LRR 8" evidence="13">
    <location>
        <begin position="224"/>
        <end position="250"/>
    </location>
</feature>
<feature type="repeat" description="LRR 9" evidence="13">
    <location>
        <begin position="251"/>
        <end position="278"/>
    </location>
</feature>
<feature type="repeat" description="LRR 10" evidence="13">
    <location>
        <begin position="279"/>
        <end position="308"/>
    </location>
</feature>
<feature type="repeat" description="LRR 11" evidence="13">
    <location>
        <begin position="309"/>
        <end position="337"/>
    </location>
</feature>
<feature type="repeat" description="LRR 12" evidence="13">
    <location>
        <begin position="338"/>
        <end position="361"/>
    </location>
</feature>
<feature type="repeat" description="LRR 13" evidence="13">
    <location>
        <begin position="362"/>
        <end position="388"/>
    </location>
</feature>
<feature type="repeat" description="LRR 14" evidence="13">
    <location>
        <begin position="389"/>
        <end position="414"/>
    </location>
</feature>
<feature type="repeat" description="LRR 15" evidence="13">
    <location>
        <begin position="415"/>
        <end position="437"/>
    </location>
</feature>
<feature type="repeat" description="LRR 16" evidence="13">
    <location>
        <begin position="438"/>
        <end position="457"/>
    </location>
</feature>
<feature type="repeat" description="LRR 17" evidence="13">
    <location>
        <begin position="458"/>
        <end position="478"/>
    </location>
</feature>
<feature type="repeat" description="LRR 18" evidence="13">
    <location>
        <begin position="479"/>
        <end position="500"/>
    </location>
</feature>
<feature type="repeat" description="LRR 19" evidence="13">
    <location>
        <begin position="501"/>
        <end position="524"/>
    </location>
</feature>
<feature type="domain" description="LRRCT">
    <location>
        <begin position="525"/>
        <end position="576"/>
    </location>
</feature>
<feature type="domain" description="TIR" evidence="5">
    <location>
        <begin position="639"/>
        <end position="782"/>
    </location>
</feature>
<feature type="short sequence motif" description="ATG16L1-binding motif">
    <location>
        <begin position="761"/>
        <end position="778"/>
    </location>
</feature>
<feature type="site" description="Interaction with bacterial lipopeptide" evidence="1">
    <location>
        <position position="349"/>
    </location>
</feature>
<feature type="glycosylation site" description="N-linked (GlcNAc...) asparagine" evidence="10 13 16">
    <location>
        <position position="147"/>
    </location>
</feature>
<feature type="glycosylation site" description="N-linked (GlcNAc...) asparagine" evidence="10 13 16">
    <location>
        <position position="414"/>
    </location>
</feature>
<feature type="glycosylation site" description="N-linked (GlcNAc...) asparagine" evidence="10 13 16">
    <location>
        <position position="442"/>
    </location>
</feature>
<feature type="disulfide bond">
    <location>
        <begin position="30"/>
        <end position="36"/>
    </location>
</feature>
<feature type="disulfide bond">
    <location>
        <begin position="353"/>
        <end position="382"/>
    </location>
</feature>
<feature type="disulfide bond">
    <location>
        <begin position="432"/>
        <end position="454"/>
    </location>
</feature>
<feature type="cross-link" description="Glycyl lysine isopeptide (Lys-Gly) (interchain with G-Cter in ubiquitin)" evidence="18">
    <location>
        <position position="754"/>
    </location>
</feature>
<feature type="mutagenesis site" description="Abolishes MYD88-binding and response to microbial cell wall components." evidence="6">
    <original>P</original>
    <variation>H</variation>
    <location>
        <position position="681"/>
    </location>
</feature>
<feature type="sequence conflict" description="In Ref. 5; BAB23770." evidence="20" ref="5">
    <original>L</original>
    <variation>P</variation>
    <location>
        <position position="59"/>
    </location>
</feature>
<feature type="sequence conflict" description="In Ref. 5; BAB23770." evidence="20" ref="5">
    <original>I</original>
    <variation>M</variation>
    <location>
        <position position="82"/>
    </location>
</feature>
<feature type="strand" evidence="21">
    <location>
        <begin position="34"/>
        <end position="37"/>
    </location>
</feature>
<feature type="strand" evidence="22">
    <location>
        <begin position="44"/>
        <end position="46"/>
    </location>
</feature>
<feature type="strand" evidence="21">
    <location>
        <begin position="56"/>
        <end position="58"/>
    </location>
</feature>
<feature type="strand" evidence="23">
    <location>
        <begin position="71"/>
        <end position="74"/>
    </location>
</feature>
<feature type="strand" evidence="21">
    <location>
        <begin position="80"/>
        <end position="82"/>
    </location>
</feature>
<feature type="turn" evidence="21">
    <location>
        <begin position="93"/>
        <end position="98"/>
    </location>
</feature>
<feature type="strand" evidence="21">
    <location>
        <begin position="104"/>
        <end position="106"/>
    </location>
</feature>
<feature type="helix" evidence="21">
    <location>
        <begin position="117"/>
        <end position="120"/>
    </location>
</feature>
<feature type="strand" evidence="21">
    <location>
        <begin position="128"/>
        <end position="130"/>
    </location>
</feature>
<feature type="strand" evidence="21">
    <location>
        <begin position="137"/>
        <end position="139"/>
    </location>
</feature>
<feature type="strand" evidence="21">
    <location>
        <begin position="153"/>
        <end position="161"/>
    </location>
</feature>
<feature type="turn" evidence="21">
    <location>
        <begin position="167"/>
        <end position="172"/>
    </location>
</feature>
<feature type="strand" evidence="21">
    <location>
        <begin position="175"/>
        <end position="183"/>
    </location>
</feature>
<feature type="turn" evidence="21">
    <location>
        <begin position="191"/>
        <end position="196"/>
    </location>
</feature>
<feature type="strand" evidence="21">
    <location>
        <begin position="198"/>
        <end position="206"/>
    </location>
</feature>
<feature type="strand" evidence="21">
    <location>
        <begin position="208"/>
        <end position="210"/>
    </location>
</feature>
<feature type="helix" evidence="21">
    <location>
        <begin position="213"/>
        <end position="219"/>
    </location>
</feature>
<feature type="turn" evidence="21">
    <location>
        <begin position="221"/>
        <end position="223"/>
    </location>
</feature>
<feature type="strand" evidence="21">
    <location>
        <begin position="224"/>
        <end position="231"/>
    </location>
</feature>
<feature type="strand" evidence="23">
    <location>
        <begin position="245"/>
        <end position="247"/>
    </location>
</feature>
<feature type="strand" evidence="21">
    <location>
        <begin position="253"/>
        <end position="258"/>
    </location>
</feature>
<feature type="strand" evidence="21">
    <location>
        <begin position="260"/>
        <end position="262"/>
    </location>
</feature>
<feature type="helix" evidence="21">
    <location>
        <begin position="263"/>
        <end position="270"/>
    </location>
</feature>
<feature type="helix" evidence="21">
    <location>
        <begin position="271"/>
        <end position="275"/>
    </location>
</feature>
<feature type="strand" evidence="21">
    <location>
        <begin position="281"/>
        <end position="286"/>
    </location>
</feature>
<feature type="strand" evidence="21">
    <location>
        <begin position="288"/>
        <end position="290"/>
    </location>
</feature>
<feature type="turn" evidence="21">
    <location>
        <begin position="299"/>
        <end position="301"/>
    </location>
</feature>
<feature type="helix" evidence="23">
    <location>
        <begin position="304"/>
        <end position="306"/>
    </location>
</feature>
<feature type="strand" evidence="21">
    <location>
        <begin position="311"/>
        <end position="316"/>
    </location>
</feature>
<feature type="helix" evidence="21">
    <location>
        <begin position="322"/>
        <end position="324"/>
    </location>
</feature>
<feature type="helix" evidence="21">
    <location>
        <begin position="330"/>
        <end position="334"/>
    </location>
</feature>
<feature type="strand" evidence="21">
    <location>
        <begin position="340"/>
        <end position="346"/>
    </location>
</feature>
<feature type="helix" evidence="21">
    <location>
        <begin position="353"/>
        <end position="358"/>
    </location>
</feature>
<feature type="strand" evidence="21">
    <location>
        <begin position="364"/>
        <end position="366"/>
    </location>
</feature>
<feature type="helix" evidence="21">
    <location>
        <begin position="374"/>
        <end position="380"/>
    </location>
</feature>
<feature type="strand" evidence="21">
    <location>
        <begin position="391"/>
        <end position="393"/>
    </location>
</feature>
<feature type="helix" evidence="21">
    <location>
        <begin position="402"/>
        <end position="408"/>
    </location>
</feature>
<feature type="helix" evidence="21">
    <location>
        <begin position="409"/>
        <end position="411"/>
    </location>
</feature>
<feature type="strand" evidence="21">
    <location>
        <begin position="417"/>
        <end position="419"/>
    </location>
</feature>
<feature type="strand" evidence="21">
    <location>
        <begin position="440"/>
        <end position="442"/>
    </location>
</feature>
<feature type="strand" evidence="21">
    <location>
        <begin position="460"/>
        <end position="463"/>
    </location>
</feature>
<feature type="strand" evidence="21">
    <location>
        <begin position="481"/>
        <end position="483"/>
    </location>
</feature>
<feature type="helix" evidence="21">
    <location>
        <begin position="495"/>
        <end position="497"/>
    </location>
</feature>
<feature type="strand" evidence="21">
    <location>
        <begin position="503"/>
        <end position="505"/>
    </location>
</feature>
<feature type="helix" evidence="21">
    <location>
        <begin position="518"/>
        <end position="521"/>
    </location>
</feature>
<feature type="strand" evidence="21">
    <location>
        <begin position="527"/>
        <end position="529"/>
    </location>
</feature>
<feature type="helix" evidence="21">
    <location>
        <begin position="539"/>
        <end position="544"/>
    </location>
</feature>
<feature type="helix" evidence="24">
    <location>
        <begin position="549"/>
        <end position="553"/>
    </location>
</feature>
<feature type="turn" evidence="24">
    <location>
        <begin position="556"/>
        <end position="561"/>
    </location>
</feature>
<feature type="strand" evidence="24">
    <location>
        <begin position="564"/>
        <end position="567"/>
    </location>
</feature>
<feature type="turn" evidence="24">
    <location>
        <begin position="568"/>
        <end position="572"/>
    </location>
</feature>
<comment type="function">
    <text evidence="3 8 9 12 14 17">Cooperates with LY96 to mediate the innate immune response to bacterial lipoproteins and other microbial cell wall components. Cooperates with TLR1 or TLR6 to mediate the innate immune response to bacterial lipoproteins or lipopeptides. Acts via MYD88 and TRAF6, leading to NF-kappa-B activation, cytokine secretion and the inflammatory response (By similarity) (PubMed:15690042). May also promote apoptosis in response to lipoproteins (By similarity). Forms activation clusters composed of several receptors depending on the ligand, these clusters trigger signaling from the cell surface and subsequently are targeted to the Golgi in a lipid-raft dependent pathway. Forms the cluster TLR2:TLR6:CD14:CD36 in response to diacylated lipopeptides and TLR2:TLR1:CD14 in response to triacylated lipopeptides (By similarity). Recognizes M.tuberculosis major T-antigen EsxA (ESAT-6) which inhibits downstream MYD88-dependent signaling (PubMed:17486091). Acts as the major receptor for M.tuberculosis lipoproteins LprA, LprG, LpqH and PhoS1 (pstS1), in conjunction with TLR1 and for some but not all lipoproteins CD14 and/or CD36. The lipoproteins act as agonists to modulate antigen presenting cell functions in response to the pathogen (PubMed:19362712). Recombinant MPT83 from M.tuberculosis stimulates secretion of cytokines (TNF-alpha, IL-6 and IL-12p40) by mouse macrophage cell lines in a TLR2-dependent fashion, which leads to increased host innate immunity responses against the bacterium (PubMed:22174456). Lung macrophages which express low levels of TLR2 respond poorly to stimulation by M.tuberculosis LpqH (PubMed:19362712). Required for normal uptake of M.tuberculosis, a process that is inhibited by M.tuberculosis LppM (PubMed:27220037). Interacts with TICAM2 (By similarity).</text>
</comment>
<comment type="function">
    <text evidence="19">(Microbial infection) Mediates activation of bone marrow-derived dendritic cells and macrophages, and production of pro-inflammatory cytokines, such as IL12 (IL12B/IL12A), triggered by Toxoplasma gondii micronemal protein 4 (MIC4) and micronemal protein 1 (MIC1).</text>
</comment>
<comment type="subunit">
    <text evidence="3 11 13 14 18">Interacts with LY96, TLR1 and TLR6 (via extracellular domain). TLR2 seems to exist in heterodimers with either TLR1 or TLR6 before stimulation by the ligand (PubMed:19931471). The heterodimers form bigger oligomers in response to their corresponding ligands as well as further heterotypic associations with other receptors such as CD14 and/or CD36 (By similarity). Binds MYD88 (via TIR domain). Interacts with TICAM1 (By similarity). Interacts with CNPY3 (PubMed:18780723). Interacts with ATG16L1 (By similarity). Interacts with non-modified M.tuberculosis protein MPT83 (PubMed:22174456). Interacts with PPP1R11 (PubMed:27805901). Interacts with TIRAP (By similarity).</text>
</comment>
<comment type="subunit">
    <text evidence="15 16">(Microbial infection) Interacts with Staphylococcus aureus protein SSL3; this interaction inhibits TLR2-mediated cytokine production.</text>
</comment>
<comment type="subunit">
    <text evidence="19">(Microbial infection) Interacts with Toxoplasma gondii micronemal protein 1 (MIC1); the interaction promotes activation of bone marrow-derived dendritic cells and macrophages (PubMed:31226171). Interacts with Toxoplasma gondii micronemal protein 4 (MIC4); the interaction promotes activation of bone marrow-derived dendritic cells and macrophages (PubMed:31226171).</text>
</comment>
<comment type="interaction">
    <interactant intactId="EBI-3505834">
        <id>Q9QUN7</id>
    </interactant>
    <interactant intactId="EBI-525108">
        <id>P22366</id>
        <label>Myd88</label>
    </interactant>
    <organismsDiffer>false</organismsDiffer>
    <experiments>4</experiments>
</comment>
<comment type="subcellular location">
    <subcellularLocation>
        <location evidence="7">Cell membrane</location>
        <topology evidence="4">Single-pass type I membrane protein</topology>
    </subcellularLocation>
    <subcellularLocation>
        <location evidence="7">Cytoplasmic vesicle</location>
        <location evidence="7">Phagosome membrane</location>
        <topology evidence="4">Single-pass type I membrane protein</topology>
    </subcellularLocation>
    <subcellularLocation>
        <location evidence="3">Membrane raft</location>
    </subcellularLocation>
    <text evidence="3">Does not reside in lipid rafts before stimulation but accumulates increasingly in the raft upon the presence of the microbial ligand. In response to diacylated lipoproteins, TLR2:TLR6 heterodimers are recruited in lipid rafts, this recruitment determine the intracellular targeting to the Golgi apparatus. Triacylated lipoproteins induce the same mechanism for TLR2:TLR1 heterodimers.</text>
</comment>
<comment type="tissue specificity">
    <text evidence="12">Detected in a macrophage cell line, smooth muscle, lung, spleen, thymus, brain and adipose tissue. Cell surface expression detected in lung alveolar macrophages, dendritic macrophages and at lower levels in lung macrophages (at protein level) (PubMed:19362712).</text>
</comment>
<comment type="domain">
    <text>Ester-bound lipid substrates are bound through a crevice formed between the LRR 11 and LRR 12.</text>
</comment>
<comment type="domain">
    <text evidence="1">The ATG16L1-binding motif mediates interaction with ATG16L1.</text>
</comment>
<comment type="PTM">
    <text evidence="18">Ubiquitinated at Lys-754 by PPP1R11, leading to its degradation. Deubiquitinated by USP2.</text>
</comment>
<comment type="PTM">
    <text evidence="3">Glycosylation of Asn-442 is critical for secretion of the N-terminal ectodomain of TLR2.</text>
</comment>
<comment type="disruption phenotype">
    <text evidence="8">Mutants succumb to Staphylococcus aureus infection within 5 days.</text>
</comment>
<comment type="similarity">
    <text evidence="20">Belongs to the Toll-like receptor family.</text>
</comment>
<comment type="caution">
    <text evidence="2 20">In some plant proteins and in human SARM1, the TIR domain has NAD(+) hydrolase (NADase) activity (By similarity). However, despite the presence of the catalytic Asp residue, the isolated TIR domain of human TLR4 lacks NADase activity (By similarity). Based on this, it is unlikely that Toll-like receptors have NADase activity.</text>
</comment>
<organism>
    <name type="scientific">Mus musculus</name>
    <name type="common">Mouse</name>
    <dbReference type="NCBI Taxonomy" id="10090"/>
    <lineage>
        <taxon>Eukaryota</taxon>
        <taxon>Metazoa</taxon>
        <taxon>Chordata</taxon>
        <taxon>Craniata</taxon>
        <taxon>Vertebrata</taxon>
        <taxon>Euteleostomi</taxon>
        <taxon>Mammalia</taxon>
        <taxon>Eutheria</taxon>
        <taxon>Euarchontoglires</taxon>
        <taxon>Glires</taxon>
        <taxon>Rodentia</taxon>
        <taxon>Myomorpha</taxon>
        <taxon>Muroidea</taxon>
        <taxon>Muridae</taxon>
        <taxon>Murinae</taxon>
        <taxon>Mus</taxon>
        <taxon>Mus</taxon>
    </lineage>
</organism>
<evidence type="ECO:0000250" key="1"/>
<evidence type="ECO:0000250" key="2">
    <source>
        <dbReference type="UniProtKB" id="O00206"/>
    </source>
</evidence>
<evidence type="ECO:0000250" key="3">
    <source>
        <dbReference type="UniProtKB" id="O60603"/>
    </source>
</evidence>
<evidence type="ECO:0000255" key="4"/>
<evidence type="ECO:0000255" key="5">
    <source>
        <dbReference type="PROSITE-ProRule" id="PRU00204"/>
    </source>
</evidence>
<evidence type="ECO:0000269" key="6">
    <source>
    </source>
</evidence>
<evidence type="ECO:0000269" key="7">
    <source>
    </source>
</evidence>
<evidence type="ECO:0000269" key="8">
    <source>
    </source>
</evidence>
<evidence type="ECO:0000269" key="9">
    <source>
    </source>
</evidence>
<evidence type="ECO:0000269" key="10">
    <source>
    </source>
</evidence>
<evidence type="ECO:0000269" key="11">
    <source>
    </source>
</evidence>
<evidence type="ECO:0000269" key="12">
    <source>
    </source>
</evidence>
<evidence type="ECO:0000269" key="13">
    <source>
    </source>
</evidence>
<evidence type="ECO:0000269" key="14">
    <source>
    </source>
</evidence>
<evidence type="ECO:0000269" key="15">
    <source>
    </source>
</evidence>
<evidence type="ECO:0000269" key="16">
    <source>
    </source>
</evidence>
<evidence type="ECO:0000269" key="17">
    <source>
    </source>
</evidence>
<evidence type="ECO:0000269" key="18">
    <source>
    </source>
</evidence>
<evidence type="ECO:0000269" key="19">
    <source>
    </source>
</evidence>
<evidence type="ECO:0000305" key="20"/>
<evidence type="ECO:0007829" key="21">
    <source>
        <dbReference type="PDB" id="2Z81"/>
    </source>
</evidence>
<evidence type="ECO:0007829" key="22">
    <source>
        <dbReference type="PDB" id="3A79"/>
    </source>
</evidence>
<evidence type="ECO:0007829" key="23">
    <source>
        <dbReference type="PDB" id="3A7C"/>
    </source>
</evidence>
<evidence type="ECO:0007829" key="24">
    <source>
        <dbReference type="PDB" id="5D3I"/>
    </source>
</evidence>
<accession>Q9QUN7</accession>
<accession>Q3U400</accession>
<accession>Q9DBC4</accession>
<dbReference type="EMBL" id="AF185284">
    <property type="protein sequence ID" value="AAF04277.1"/>
    <property type="molecule type" value="mRNA"/>
</dbReference>
<dbReference type="EMBL" id="AF124741">
    <property type="protein sequence ID" value="AAD46481.1"/>
    <property type="molecule type" value="mRNA"/>
</dbReference>
<dbReference type="EMBL" id="AF216289">
    <property type="protein sequence ID" value="AAF28345.1"/>
    <property type="molecule type" value="mRNA"/>
</dbReference>
<dbReference type="EMBL" id="AF165189">
    <property type="protein sequence ID" value="AAD49335.1"/>
    <property type="molecule type" value="mRNA"/>
</dbReference>
<dbReference type="EMBL" id="AK005043">
    <property type="protein sequence ID" value="BAB23770.1"/>
    <property type="molecule type" value="mRNA"/>
</dbReference>
<dbReference type="EMBL" id="AK154504">
    <property type="protein sequence ID" value="BAE32635.1"/>
    <property type="molecule type" value="mRNA"/>
</dbReference>
<dbReference type="CCDS" id="CCDS17435.1"/>
<dbReference type="RefSeq" id="NP_036035.3">
    <property type="nucleotide sequence ID" value="NM_011905.3"/>
</dbReference>
<dbReference type="PDB" id="2Z81">
    <property type="method" value="X-ray"/>
    <property type="resolution" value="1.80 A"/>
    <property type="chains" value="A=27-506"/>
</dbReference>
<dbReference type="PDB" id="2Z82">
    <property type="method" value="X-ray"/>
    <property type="resolution" value="2.60 A"/>
    <property type="chains" value="A=27-506"/>
</dbReference>
<dbReference type="PDB" id="3A79">
    <property type="method" value="X-ray"/>
    <property type="resolution" value="2.90 A"/>
    <property type="chains" value="A=1-506"/>
</dbReference>
<dbReference type="PDB" id="3A7B">
    <property type="method" value="X-ray"/>
    <property type="resolution" value="2.53 A"/>
    <property type="chains" value="A=1-506"/>
</dbReference>
<dbReference type="PDB" id="3A7C">
    <property type="method" value="X-ray"/>
    <property type="resolution" value="2.40 A"/>
    <property type="chains" value="A=1-506"/>
</dbReference>
<dbReference type="PDB" id="5D3I">
    <property type="method" value="X-ray"/>
    <property type="resolution" value="3.20 A"/>
    <property type="chains" value="A=25-589"/>
</dbReference>
<dbReference type="PDBsum" id="2Z81"/>
<dbReference type="PDBsum" id="2Z82"/>
<dbReference type="PDBsum" id="3A79"/>
<dbReference type="PDBsum" id="3A7B"/>
<dbReference type="PDBsum" id="3A7C"/>
<dbReference type="PDBsum" id="5D3I"/>
<dbReference type="SMR" id="Q9QUN7"/>
<dbReference type="BioGRID" id="204895">
    <property type="interactions" value="2"/>
</dbReference>
<dbReference type="CORUM" id="Q9QUN7"/>
<dbReference type="DIP" id="DIP-61222N"/>
<dbReference type="FunCoup" id="Q9QUN7">
    <property type="interactions" value="564"/>
</dbReference>
<dbReference type="IntAct" id="Q9QUN7">
    <property type="interactions" value="14"/>
</dbReference>
<dbReference type="MINT" id="Q9QUN7"/>
<dbReference type="STRING" id="10090.ENSMUSP00000029623"/>
<dbReference type="BindingDB" id="Q9QUN7"/>
<dbReference type="ChEMBL" id="CHEMBL1075106"/>
<dbReference type="GuidetoPHARMACOLOGY" id="1752"/>
<dbReference type="GlyCosmos" id="Q9QUN7">
    <property type="glycosylation" value="3 sites, No reported glycans"/>
</dbReference>
<dbReference type="GlyGen" id="Q9QUN7">
    <property type="glycosylation" value="3 sites, 2 N-linked glycans (2 sites)"/>
</dbReference>
<dbReference type="iPTMnet" id="Q9QUN7"/>
<dbReference type="PhosphoSitePlus" id="Q9QUN7"/>
<dbReference type="SwissPalm" id="Q9QUN7"/>
<dbReference type="jPOST" id="Q9QUN7"/>
<dbReference type="PaxDb" id="10090-ENSMUSP00000029623"/>
<dbReference type="PeptideAtlas" id="Q9QUN7"/>
<dbReference type="ProteomicsDB" id="258894"/>
<dbReference type="Pumba" id="Q9QUN7"/>
<dbReference type="ABCD" id="Q9QUN7">
    <property type="antibodies" value="23 sequenced antibodies"/>
</dbReference>
<dbReference type="DNASU" id="24088"/>
<dbReference type="GeneID" id="24088"/>
<dbReference type="KEGG" id="mmu:24088"/>
<dbReference type="AGR" id="MGI:1346060"/>
<dbReference type="CTD" id="7097"/>
<dbReference type="MGI" id="MGI:1346060">
    <property type="gene designation" value="Tlr2"/>
</dbReference>
<dbReference type="eggNOG" id="KOG4641">
    <property type="taxonomic scope" value="Eukaryota"/>
</dbReference>
<dbReference type="InParanoid" id="Q9QUN7"/>
<dbReference type="OrthoDB" id="1081807at2759"/>
<dbReference type="PhylomeDB" id="Q9QUN7"/>
<dbReference type="Reactome" id="R-MMU-1461957">
    <property type="pathway name" value="Beta defensins"/>
</dbReference>
<dbReference type="Reactome" id="R-MMU-5686938">
    <property type="pathway name" value="Regulation of TLR by endogenous ligand"/>
</dbReference>
<dbReference type="Reactome" id="R-MMU-6798695">
    <property type="pathway name" value="Neutrophil degranulation"/>
</dbReference>
<dbReference type="BioGRID-ORCS" id="24088">
    <property type="hits" value="2 hits in 77 CRISPR screens"/>
</dbReference>
<dbReference type="EvolutionaryTrace" id="Q9QUN7"/>
<dbReference type="PRO" id="PR:Q9QUN7"/>
<dbReference type="Proteomes" id="UP000000589">
    <property type="component" value="Unplaced"/>
</dbReference>
<dbReference type="RNAct" id="Q9QUN7">
    <property type="molecule type" value="protein"/>
</dbReference>
<dbReference type="GO" id="GO:0009897">
    <property type="term" value="C:external side of plasma membrane"/>
    <property type="evidence" value="ECO:0000314"/>
    <property type="project" value="MGI"/>
</dbReference>
<dbReference type="GO" id="GO:0005794">
    <property type="term" value="C:Golgi apparatus"/>
    <property type="evidence" value="ECO:0000250"/>
    <property type="project" value="UniProtKB"/>
</dbReference>
<dbReference type="GO" id="GO:0045121">
    <property type="term" value="C:membrane raft"/>
    <property type="evidence" value="ECO:0000250"/>
    <property type="project" value="UniProtKB"/>
</dbReference>
<dbReference type="GO" id="GO:0030670">
    <property type="term" value="C:phagocytic vesicle membrane"/>
    <property type="evidence" value="ECO:0007669"/>
    <property type="project" value="UniProtKB-SubCell"/>
</dbReference>
<dbReference type="GO" id="GO:0005886">
    <property type="term" value="C:plasma membrane"/>
    <property type="evidence" value="ECO:0000314"/>
    <property type="project" value="MGI"/>
</dbReference>
<dbReference type="GO" id="GO:0035354">
    <property type="term" value="C:Toll-like receptor 1-Toll-like receptor 2 protein complex"/>
    <property type="evidence" value="ECO:0000266"/>
    <property type="project" value="MGI"/>
</dbReference>
<dbReference type="GO" id="GO:0035355">
    <property type="term" value="C:Toll-like receptor 2-Toll-like receptor 6 protein complex"/>
    <property type="evidence" value="ECO:0000353"/>
    <property type="project" value="MGI"/>
</dbReference>
<dbReference type="GO" id="GO:0001540">
    <property type="term" value="F:amyloid-beta binding"/>
    <property type="evidence" value="ECO:0000314"/>
    <property type="project" value="ARUK-UCL"/>
</dbReference>
<dbReference type="GO" id="GO:0042498">
    <property type="term" value="F:diacyl lipopeptide binding"/>
    <property type="evidence" value="ECO:0000314"/>
    <property type="project" value="MGI"/>
</dbReference>
<dbReference type="GO" id="GO:0070891">
    <property type="term" value="F:lipoteichoic acid binding"/>
    <property type="evidence" value="ECO:0000314"/>
    <property type="project" value="MGI"/>
</dbReference>
<dbReference type="GO" id="GO:0061809">
    <property type="term" value="F:NAD+ nucleosidase activity, cyclic ADP-ribose generating"/>
    <property type="evidence" value="ECO:0007669"/>
    <property type="project" value="UniProtKB-EC"/>
</dbReference>
<dbReference type="GO" id="GO:0038187">
    <property type="term" value="F:pattern recognition receptor activity"/>
    <property type="evidence" value="ECO:0000315"/>
    <property type="project" value="MGI"/>
</dbReference>
<dbReference type="GO" id="GO:0044877">
    <property type="term" value="F:protein-containing complex binding"/>
    <property type="evidence" value="ECO:0000353"/>
    <property type="project" value="ARUK-UCL"/>
</dbReference>
<dbReference type="GO" id="GO:0004888">
    <property type="term" value="F:transmembrane signaling receptor activity"/>
    <property type="evidence" value="ECO:0007669"/>
    <property type="project" value="InterPro"/>
</dbReference>
<dbReference type="GO" id="GO:0042497">
    <property type="term" value="F:triacyl lipopeptide binding"/>
    <property type="evidence" value="ECO:0000314"/>
    <property type="project" value="MGI"/>
</dbReference>
<dbReference type="GO" id="GO:0002752">
    <property type="term" value="P:cell surface pattern recognition receptor signaling pathway"/>
    <property type="evidence" value="ECO:0000315"/>
    <property type="project" value="MGI"/>
</dbReference>
<dbReference type="GO" id="GO:0071221">
    <property type="term" value="P:cellular response to bacterial lipopeptide"/>
    <property type="evidence" value="ECO:0000314"/>
    <property type="project" value="BHF-UCL"/>
</dbReference>
<dbReference type="GO" id="GO:0071726">
    <property type="term" value="P:cellular response to diacyl bacterial lipopeptide"/>
    <property type="evidence" value="ECO:0000250"/>
    <property type="project" value="UniProtKB"/>
</dbReference>
<dbReference type="GO" id="GO:0071223">
    <property type="term" value="P:cellular response to lipoteichoic acid"/>
    <property type="evidence" value="ECO:0000315"/>
    <property type="project" value="MGI"/>
</dbReference>
<dbReference type="GO" id="GO:0071224">
    <property type="term" value="P:cellular response to peptidoglycan"/>
    <property type="evidence" value="ECO:0000315"/>
    <property type="project" value="MGI"/>
</dbReference>
<dbReference type="GO" id="GO:0071727">
    <property type="term" value="P:cellular response to triacyl bacterial lipopeptide"/>
    <property type="evidence" value="ECO:0000250"/>
    <property type="project" value="UniProtKB"/>
</dbReference>
<dbReference type="GO" id="GO:0006952">
    <property type="term" value="P:defense response"/>
    <property type="evidence" value="ECO:0000315"/>
    <property type="project" value="MGI"/>
</dbReference>
<dbReference type="GO" id="GO:0050830">
    <property type="term" value="P:defense response to Gram-positive bacterium"/>
    <property type="evidence" value="ECO:0000315"/>
    <property type="project" value="MGI"/>
</dbReference>
<dbReference type="GO" id="GO:0042496">
    <property type="term" value="P:detection of diacyl bacterial lipopeptide"/>
    <property type="evidence" value="ECO:0000266"/>
    <property type="project" value="MGI"/>
</dbReference>
<dbReference type="GO" id="GO:0042495">
    <property type="term" value="P:detection of triacyl bacterial lipopeptide"/>
    <property type="evidence" value="ECO:0000266"/>
    <property type="project" value="MGI"/>
</dbReference>
<dbReference type="GO" id="GO:0070371">
    <property type="term" value="P:ERK1 and ERK2 cascade"/>
    <property type="evidence" value="ECO:0000315"/>
    <property type="project" value="MGI"/>
</dbReference>
<dbReference type="GO" id="GO:0006954">
    <property type="term" value="P:inflammatory response"/>
    <property type="evidence" value="ECO:0007669"/>
    <property type="project" value="UniProtKB-KW"/>
</dbReference>
<dbReference type="GO" id="GO:0045087">
    <property type="term" value="P:innate immune response"/>
    <property type="evidence" value="ECO:0000314"/>
    <property type="project" value="BHF-UCL"/>
</dbReference>
<dbReference type="GO" id="GO:0007612">
    <property type="term" value="P:learning"/>
    <property type="evidence" value="ECO:0000316"/>
    <property type="project" value="ARUK-UCL"/>
</dbReference>
<dbReference type="GO" id="GO:0050900">
    <property type="term" value="P:leukocyte migration"/>
    <property type="evidence" value="ECO:0000315"/>
    <property type="project" value="MGI"/>
</dbReference>
<dbReference type="GO" id="GO:0014005">
    <property type="term" value="P:microglia development"/>
    <property type="evidence" value="ECO:0000316"/>
    <property type="project" value="ARUK-UCL"/>
</dbReference>
<dbReference type="GO" id="GO:0002755">
    <property type="term" value="P:MyD88-dependent toll-like receptor signaling pathway"/>
    <property type="evidence" value="ECO:0000316"/>
    <property type="project" value="MGI"/>
</dbReference>
<dbReference type="GO" id="GO:0030837">
    <property type="term" value="P:negative regulation of actin filament polymerization"/>
    <property type="evidence" value="ECO:0000316"/>
    <property type="project" value="ARUK-UCL"/>
</dbReference>
<dbReference type="GO" id="GO:0032695">
    <property type="term" value="P:negative regulation of interleukin-12 production"/>
    <property type="evidence" value="ECO:0000315"/>
    <property type="project" value="MGI"/>
</dbReference>
<dbReference type="GO" id="GO:0032700">
    <property type="term" value="P:negative regulation of interleukin-17 production"/>
    <property type="evidence" value="ECO:0000315"/>
    <property type="project" value="MGI"/>
</dbReference>
<dbReference type="GO" id="GO:0050765">
    <property type="term" value="P:negative regulation of phagocytosis"/>
    <property type="evidence" value="ECO:0000315"/>
    <property type="project" value="ARUK-UCL"/>
</dbReference>
<dbReference type="GO" id="GO:0051964">
    <property type="term" value="P:negative regulation of synapse assembly"/>
    <property type="evidence" value="ECO:0000316"/>
    <property type="project" value="ARUK-UCL"/>
</dbReference>
<dbReference type="GO" id="GO:1990266">
    <property type="term" value="P:neutrophil migration"/>
    <property type="evidence" value="ECO:0000315"/>
    <property type="project" value="MGI"/>
</dbReference>
<dbReference type="GO" id="GO:0006809">
    <property type="term" value="P:nitric oxide biosynthetic process"/>
    <property type="evidence" value="ECO:0000315"/>
    <property type="project" value="MGI"/>
</dbReference>
<dbReference type="GO" id="GO:0032722">
    <property type="term" value="P:positive regulation of chemokine production"/>
    <property type="evidence" value="ECO:0000315"/>
    <property type="project" value="MGI"/>
</dbReference>
<dbReference type="GO" id="GO:0001819">
    <property type="term" value="P:positive regulation of cytokine production"/>
    <property type="evidence" value="ECO:0000316"/>
    <property type="project" value="MGI"/>
</dbReference>
<dbReference type="GO" id="GO:0070374">
    <property type="term" value="P:positive regulation of ERK1 and ERK2 cascade"/>
    <property type="evidence" value="ECO:0000315"/>
    <property type="project" value="MGI"/>
</dbReference>
<dbReference type="GO" id="GO:0050729">
    <property type="term" value="P:positive regulation of inflammatory response"/>
    <property type="evidence" value="ECO:0000316"/>
    <property type="project" value="ARUK-UCL"/>
</dbReference>
<dbReference type="GO" id="GO:0032728">
    <property type="term" value="P:positive regulation of interferon-beta production"/>
    <property type="evidence" value="ECO:0000314"/>
    <property type="project" value="BHF-UCL"/>
</dbReference>
<dbReference type="GO" id="GO:0032731">
    <property type="term" value="P:positive regulation of interleukin-1 beta production"/>
    <property type="evidence" value="ECO:0000316"/>
    <property type="project" value="ARUK-UCL"/>
</dbReference>
<dbReference type="GO" id="GO:0032735">
    <property type="term" value="P:positive regulation of interleukin-12 production"/>
    <property type="evidence" value="ECO:0000314"/>
    <property type="project" value="BHF-UCL"/>
</dbReference>
<dbReference type="GO" id="GO:0032741">
    <property type="term" value="P:positive regulation of interleukin-18 production"/>
    <property type="evidence" value="ECO:0000314"/>
    <property type="project" value="BHF-UCL"/>
</dbReference>
<dbReference type="GO" id="GO:0032755">
    <property type="term" value="P:positive regulation of interleukin-6 production"/>
    <property type="evidence" value="ECO:0000314"/>
    <property type="project" value="BHF-UCL"/>
</dbReference>
<dbReference type="GO" id="GO:1902533">
    <property type="term" value="P:positive regulation of intracellular signal transduction"/>
    <property type="evidence" value="ECO:0000315"/>
    <property type="project" value="MGI"/>
</dbReference>
<dbReference type="GO" id="GO:0002687">
    <property type="term" value="P:positive regulation of leukocyte migration"/>
    <property type="evidence" value="ECO:0000315"/>
    <property type="project" value="MGI"/>
</dbReference>
<dbReference type="GO" id="GO:0060907">
    <property type="term" value="P:positive regulation of macrophage cytokine production"/>
    <property type="evidence" value="ECO:0000314"/>
    <property type="project" value="MGI"/>
</dbReference>
<dbReference type="GO" id="GO:1902624">
    <property type="term" value="P:positive regulation of neutrophil migration"/>
    <property type="evidence" value="ECO:0000315"/>
    <property type="project" value="MGI"/>
</dbReference>
<dbReference type="GO" id="GO:0045429">
    <property type="term" value="P:positive regulation of nitric oxide biosynthetic process"/>
    <property type="evidence" value="ECO:0000315"/>
    <property type="project" value="MGI"/>
</dbReference>
<dbReference type="GO" id="GO:0045944">
    <property type="term" value="P:positive regulation of transcription by RNA polymerase II"/>
    <property type="evidence" value="ECO:0000314"/>
    <property type="project" value="BHF-UCL"/>
</dbReference>
<dbReference type="GO" id="GO:0032760">
    <property type="term" value="P:positive regulation of tumor necrosis factor production"/>
    <property type="evidence" value="ECO:0000314"/>
    <property type="project" value="BHF-UCL"/>
</dbReference>
<dbReference type="GO" id="GO:1904417">
    <property type="term" value="P:positive regulation of xenophagy"/>
    <property type="evidence" value="ECO:0000315"/>
    <property type="project" value="MGI"/>
</dbReference>
<dbReference type="GO" id="GO:0002730">
    <property type="term" value="P:regulation of dendritic cell cytokine production"/>
    <property type="evidence" value="ECO:0000314"/>
    <property type="project" value="MGI"/>
</dbReference>
<dbReference type="GO" id="GO:0009617">
    <property type="term" value="P:response to bacterium"/>
    <property type="evidence" value="ECO:0000315"/>
    <property type="project" value="MGI"/>
</dbReference>
<dbReference type="GO" id="GO:0002238">
    <property type="term" value="P:response to molecule of fungal origin"/>
    <property type="evidence" value="ECO:0000315"/>
    <property type="project" value="MGI"/>
</dbReference>
<dbReference type="GO" id="GO:0032494">
    <property type="term" value="P:response to peptidoglycan"/>
    <property type="evidence" value="ECO:0000315"/>
    <property type="project" value="MGI"/>
</dbReference>
<dbReference type="GO" id="GO:0098792">
    <property type="term" value="P:xenophagy"/>
    <property type="evidence" value="ECO:0000315"/>
    <property type="project" value="MGI"/>
</dbReference>
<dbReference type="FunFam" id="3.40.50.10140:FF:000001">
    <property type="entry name" value="Toll-like receptor 2"/>
    <property type="match status" value="1"/>
</dbReference>
<dbReference type="FunFam" id="3.80.10.10:FF:000046">
    <property type="entry name" value="Toll-like receptor 2"/>
    <property type="match status" value="1"/>
</dbReference>
<dbReference type="Gene3D" id="3.80.10.10">
    <property type="entry name" value="Ribonuclease Inhibitor"/>
    <property type="match status" value="1"/>
</dbReference>
<dbReference type="Gene3D" id="3.40.50.10140">
    <property type="entry name" value="Toll/interleukin-1 receptor homology (TIR) domain"/>
    <property type="match status" value="1"/>
</dbReference>
<dbReference type="InterPro" id="IPR000483">
    <property type="entry name" value="Cys-rich_flank_reg_C"/>
</dbReference>
<dbReference type="InterPro" id="IPR001611">
    <property type="entry name" value="Leu-rich_rpt"/>
</dbReference>
<dbReference type="InterPro" id="IPR003591">
    <property type="entry name" value="Leu-rich_rpt_typical-subtyp"/>
</dbReference>
<dbReference type="InterPro" id="IPR032675">
    <property type="entry name" value="LRR_dom_sf"/>
</dbReference>
<dbReference type="InterPro" id="IPR000157">
    <property type="entry name" value="TIR_dom"/>
</dbReference>
<dbReference type="InterPro" id="IPR017241">
    <property type="entry name" value="Toll-like_receptor"/>
</dbReference>
<dbReference type="InterPro" id="IPR035897">
    <property type="entry name" value="Toll_tir_struct_dom_sf"/>
</dbReference>
<dbReference type="PANTHER" id="PTHR24365">
    <property type="entry name" value="TOLL-LIKE RECEPTOR"/>
    <property type="match status" value="1"/>
</dbReference>
<dbReference type="PANTHER" id="PTHR24365:SF17">
    <property type="entry name" value="TOLL-LIKE RECEPTOR 2"/>
    <property type="match status" value="1"/>
</dbReference>
<dbReference type="Pfam" id="PF13516">
    <property type="entry name" value="LRR_6"/>
    <property type="match status" value="1"/>
</dbReference>
<dbReference type="Pfam" id="PF13855">
    <property type="entry name" value="LRR_8"/>
    <property type="match status" value="2"/>
</dbReference>
<dbReference type="Pfam" id="PF01582">
    <property type="entry name" value="TIR"/>
    <property type="match status" value="1"/>
</dbReference>
<dbReference type="PIRSF" id="PIRSF037595">
    <property type="entry name" value="Toll-like_receptor"/>
    <property type="match status" value="1"/>
</dbReference>
<dbReference type="PRINTS" id="PR01537">
    <property type="entry name" value="INTRLKN1R1F"/>
</dbReference>
<dbReference type="PRINTS" id="PR00019">
    <property type="entry name" value="LEURICHRPT"/>
</dbReference>
<dbReference type="SMART" id="SM00364">
    <property type="entry name" value="LRR_BAC"/>
    <property type="match status" value="5"/>
</dbReference>
<dbReference type="SMART" id="SM00369">
    <property type="entry name" value="LRR_TYP"/>
    <property type="match status" value="7"/>
</dbReference>
<dbReference type="SMART" id="SM00082">
    <property type="entry name" value="LRRCT"/>
    <property type="match status" value="1"/>
</dbReference>
<dbReference type="SMART" id="SM00255">
    <property type="entry name" value="TIR"/>
    <property type="match status" value="1"/>
</dbReference>
<dbReference type="SUPFAM" id="SSF52058">
    <property type="entry name" value="L domain-like"/>
    <property type="match status" value="1"/>
</dbReference>
<dbReference type="SUPFAM" id="SSF52047">
    <property type="entry name" value="RNI-like"/>
    <property type="match status" value="1"/>
</dbReference>
<dbReference type="SUPFAM" id="SSF52200">
    <property type="entry name" value="Toll/Interleukin receptor TIR domain"/>
    <property type="match status" value="1"/>
</dbReference>
<dbReference type="PROSITE" id="PS51450">
    <property type="entry name" value="LRR"/>
    <property type="match status" value="9"/>
</dbReference>
<dbReference type="PROSITE" id="PS50104">
    <property type="entry name" value="TIR"/>
    <property type="match status" value="1"/>
</dbReference>
<gene>
    <name type="primary">Tlr2</name>
</gene>
<sequence>MLRALWLFWILVAITVLFSKRCSAQESLSCDASGVCDGRSRSFTSIPSGLTAAMKSLDLSFNKITYIGHGDLRACANLQVLILKSSRINTIEGDAFYSLGSLEHLDLSDNHLSSLSSSWFGPLSSLKYLNLMGNPYQTLGVTSLFPNLTNLQTLRIGNVETFSEIRRIDFAGLTSLNELEIKALSLRNYQSQSLKSIRDIHHLTLHLSESAFLLEIFADILSSVRYLELRDTNLARFQFSPLPVDEVSSPMKKLAFRGSVLTDESFNELLKLLRYILELSEVEFDDCTLNGLGDFNPSESDVVSELGKVETVTIRRLHIPQFYLFYDLSTVYSLLEKVKRITVENSKVFLVPCSFSQHLKSLEFLDLSENLMVEEYLKNSACKGAWPSLQTLVLSQNHLRSMQKTGEILLTLKNLTSLDISRNTFHPMPDSCQWPEKMRFLNLSSTGIRVVKTCIPQTLEVLDVSNNNLDSFSLFLPRLQELYISRNKLKTLPDASLFPVLLVMKIRENAVSTFSKDQLGSFPKLETLEAGDNHFVCSCELLSFTMETPALAQILVDWPDSYLCDSPPRLHGHRLQDARPSVLECHQAALVSGVCCALLLLILLVGALCHHFHGLWYLRMMWAWLQAKRKPKKAPCRDVCYDAFVSYSEQDSHWVENLMVQQLENSDPPFKLCLHKRDFVPGKWIIDNIIDSIEKSHKTVFVLSENFVRSEWCKYELDFSHFRLFDENNDAAILVLLEPIERKAIPQRFCKLRKIMNTKTYLEWPLDEGQQEVFWVNLRTAIKS</sequence>